<sequence>MTTLLTLQDVCVVFDDRHVIDNVSLSIESNKIITLIGPNGAGKSTLVKTILGLQKPTSGTIKKEKKLRIGYVPQKLHLNDSLPLSVHGFLKLAGKYSQQEHLSALKLVEAEHLLNSNMHKLSGGESQRVLLARALLQRPDLLVLDEPAQGVDVQGQISLYALIESIRHRFNCAVFMVSHDLHLVMAKTDEVICLQHHICCSGAPESISKHPKYIALFGQQRDQQLAFYHHEHHHNHDLSGEPSDGSCCSKNKKAHQ</sequence>
<reference key="1">
    <citation type="journal article" date="2005" name="Proc. Natl. Acad. Sci. U.S.A.">
        <title>Complete genome sequence of Vibrio fischeri: a symbiotic bacterium with pathogenic congeners.</title>
        <authorList>
            <person name="Ruby E.G."/>
            <person name="Urbanowski M."/>
            <person name="Campbell J."/>
            <person name="Dunn A."/>
            <person name="Faini M."/>
            <person name="Gunsalus R."/>
            <person name="Lostroh P."/>
            <person name="Lupp C."/>
            <person name="McCann J."/>
            <person name="Millikan D."/>
            <person name="Schaefer A."/>
            <person name="Stabb E."/>
            <person name="Stevens A."/>
            <person name="Visick K."/>
            <person name="Whistler C."/>
            <person name="Greenberg E.P."/>
        </authorList>
    </citation>
    <scope>NUCLEOTIDE SEQUENCE [LARGE SCALE GENOMIC DNA]</scope>
    <source>
        <strain>ATCC 700601 / ES114</strain>
    </source>
</reference>
<proteinExistence type="inferred from homology"/>
<accession>Q5E6M2</accession>
<name>ZNUC1_ALIF1</name>
<gene>
    <name evidence="1" type="primary">znuC1</name>
    <name type="ordered locus">VF_0829</name>
</gene>
<comment type="function">
    <text evidence="1">Part of the ABC transporter complex ZnuABC involved in zinc import. Responsible for energy coupling to the transport system.</text>
</comment>
<comment type="catalytic activity">
    <reaction evidence="1">
        <text>Zn(2+)(out) + ATP(in) + H2O(in) = Zn(2+)(in) + ADP(in) + phosphate(in) + H(+)(in)</text>
        <dbReference type="Rhea" id="RHEA:29795"/>
        <dbReference type="ChEBI" id="CHEBI:15377"/>
        <dbReference type="ChEBI" id="CHEBI:15378"/>
        <dbReference type="ChEBI" id="CHEBI:29105"/>
        <dbReference type="ChEBI" id="CHEBI:30616"/>
        <dbReference type="ChEBI" id="CHEBI:43474"/>
        <dbReference type="ChEBI" id="CHEBI:456216"/>
        <dbReference type="EC" id="7.2.2.20"/>
    </reaction>
</comment>
<comment type="subunit">
    <text evidence="1">The complex is composed of two ATP-binding proteins (ZnuC), two transmembrane proteins (ZnuB) and a solute-binding protein (ZnuA).</text>
</comment>
<comment type="subcellular location">
    <subcellularLocation>
        <location evidence="1">Cell inner membrane</location>
        <topology evidence="1">Peripheral membrane protein</topology>
    </subcellularLocation>
</comment>
<comment type="similarity">
    <text evidence="1">Belongs to the ABC transporter superfamily. Zinc importer (TC 3.A.1.15.5) family.</text>
</comment>
<protein>
    <recommendedName>
        <fullName evidence="1">Zinc import ATP-binding protein ZnuC 1</fullName>
        <ecNumber evidence="1">7.2.2.20</ecNumber>
    </recommendedName>
</protein>
<evidence type="ECO:0000255" key="1">
    <source>
        <dbReference type="HAMAP-Rule" id="MF_01725"/>
    </source>
</evidence>
<evidence type="ECO:0000256" key="2">
    <source>
        <dbReference type="SAM" id="MobiDB-lite"/>
    </source>
</evidence>
<dbReference type="EC" id="7.2.2.20" evidence="1"/>
<dbReference type="EMBL" id="CP000020">
    <property type="protein sequence ID" value="AAW85324.1"/>
    <property type="molecule type" value="Genomic_DNA"/>
</dbReference>
<dbReference type="RefSeq" id="YP_204212.1">
    <property type="nucleotide sequence ID" value="NC_006840.2"/>
</dbReference>
<dbReference type="SMR" id="Q5E6M2"/>
<dbReference type="STRING" id="312309.VF_0829"/>
<dbReference type="EnsemblBacteria" id="AAW85324">
    <property type="protein sequence ID" value="AAW85324"/>
    <property type="gene ID" value="VF_0829"/>
</dbReference>
<dbReference type="GeneID" id="54163497"/>
<dbReference type="KEGG" id="vfi:VF_0829"/>
<dbReference type="PATRIC" id="fig|312309.11.peg.822"/>
<dbReference type="eggNOG" id="COG1121">
    <property type="taxonomic scope" value="Bacteria"/>
</dbReference>
<dbReference type="HOGENOM" id="CLU_000604_1_11_6"/>
<dbReference type="OrthoDB" id="9780942at2"/>
<dbReference type="Proteomes" id="UP000000537">
    <property type="component" value="Chromosome I"/>
</dbReference>
<dbReference type="GO" id="GO:0005886">
    <property type="term" value="C:plasma membrane"/>
    <property type="evidence" value="ECO:0007669"/>
    <property type="project" value="UniProtKB-SubCell"/>
</dbReference>
<dbReference type="GO" id="GO:0015633">
    <property type="term" value="F:ABC-type zinc transporter activity"/>
    <property type="evidence" value="ECO:0007669"/>
    <property type="project" value="UniProtKB-EC"/>
</dbReference>
<dbReference type="GO" id="GO:0005524">
    <property type="term" value="F:ATP binding"/>
    <property type="evidence" value="ECO:0007669"/>
    <property type="project" value="UniProtKB-KW"/>
</dbReference>
<dbReference type="GO" id="GO:0016887">
    <property type="term" value="F:ATP hydrolysis activity"/>
    <property type="evidence" value="ECO:0007669"/>
    <property type="project" value="InterPro"/>
</dbReference>
<dbReference type="GO" id="GO:0010043">
    <property type="term" value="P:response to zinc ion"/>
    <property type="evidence" value="ECO:0007669"/>
    <property type="project" value="TreeGrafter"/>
</dbReference>
<dbReference type="FunFam" id="3.40.50.300:FF:000392">
    <property type="entry name" value="Zinc import ATP-binding protein ZnuC"/>
    <property type="match status" value="1"/>
</dbReference>
<dbReference type="Gene3D" id="3.40.50.300">
    <property type="entry name" value="P-loop containing nucleotide triphosphate hydrolases"/>
    <property type="match status" value="1"/>
</dbReference>
<dbReference type="InterPro" id="IPR003593">
    <property type="entry name" value="AAA+_ATPase"/>
</dbReference>
<dbReference type="InterPro" id="IPR003439">
    <property type="entry name" value="ABC_transporter-like_ATP-bd"/>
</dbReference>
<dbReference type="InterPro" id="IPR017871">
    <property type="entry name" value="ABC_transporter-like_CS"/>
</dbReference>
<dbReference type="InterPro" id="IPR050153">
    <property type="entry name" value="Metal_Ion_Import_ABC"/>
</dbReference>
<dbReference type="InterPro" id="IPR027417">
    <property type="entry name" value="P-loop_NTPase"/>
</dbReference>
<dbReference type="NCBIfam" id="NF007090">
    <property type="entry name" value="PRK09544.1"/>
    <property type="match status" value="1"/>
</dbReference>
<dbReference type="PANTHER" id="PTHR42734">
    <property type="entry name" value="METAL TRANSPORT SYSTEM ATP-BINDING PROTEIN TM_0124-RELATED"/>
    <property type="match status" value="1"/>
</dbReference>
<dbReference type="PANTHER" id="PTHR42734:SF9">
    <property type="entry name" value="ZINC IMPORT ATP-BINDING PROTEIN ZNUC"/>
    <property type="match status" value="1"/>
</dbReference>
<dbReference type="Pfam" id="PF00005">
    <property type="entry name" value="ABC_tran"/>
    <property type="match status" value="1"/>
</dbReference>
<dbReference type="SMART" id="SM00382">
    <property type="entry name" value="AAA"/>
    <property type="match status" value="1"/>
</dbReference>
<dbReference type="SUPFAM" id="SSF52540">
    <property type="entry name" value="P-loop containing nucleoside triphosphate hydrolases"/>
    <property type="match status" value="1"/>
</dbReference>
<dbReference type="PROSITE" id="PS00211">
    <property type="entry name" value="ABC_TRANSPORTER_1"/>
    <property type="match status" value="1"/>
</dbReference>
<dbReference type="PROSITE" id="PS50893">
    <property type="entry name" value="ABC_TRANSPORTER_2"/>
    <property type="match status" value="1"/>
</dbReference>
<dbReference type="PROSITE" id="PS51298">
    <property type="entry name" value="ZNUC"/>
    <property type="match status" value="1"/>
</dbReference>
<feature type="chain" id="PRO_0000281560" description="Zinc import ATP-binding protein ZnuC 1">
    <location>
        <begin position="1"/>
        <end position="256"/>
    </location>
</feature>
<feature type="domain" description="ABC transporter" evidence="1">
    <location>
        <begin position="5"/>
        <end position="220"/>
    </location>
</feature>
<feature type="region of interest" description="Disordered" evidence="2">
    <location>
        <begin position="232"/>
        <end position="256"/>
    </location>
</feature>
<feature type="binding site" evidence="1">
    <location>
        <begin position="37"/>
        <end position="44"/>
    </location>
    <ligand>
        <name>ATP</name>
        <dbReference type="ChEBI" id="CHEBI:30616"/>
    </ligand>
</feature>
<keyword id="KW-0067">ATP-binding</keyword>
<keyword id="KW-0997">Cell inner membrane</keyword>
<keyword id="KW-1003">Cell membrane</keyword>
<keyword id="KW-0406">Ion transport</keyword>
<keyword id="KW-0472">Membrane</keyword>
<keyword id="KW-0547">Nucleotide-binding</keyword>
<keyword id="KW-1185">Reference proteome</keyword>
<keyword id="KW-1278">Translocase</keyword>
<keyword id="KW-0813">Transport</keyword>
<keyword id="KW-0862">Zinc</keyword>
<keyword id="KW-0864">Zinc transport</keyword>
<organism>
    <name type="scientific">Aliivibrio fischeri (strain ATCC 700601 / ES114)</name>
    <name type="common">Vibrio fischeri</name>
    <dbReference type="NCBI Taxonomy" id="312309"/>
    <lineage>
        <taxon>Bacteria</taxon>
        <taxon>Pseudomonadati</taxon>
        <taxon>Pseudomonadota</taxon>
        <taxon>Gammaproteobacteria</taxon>
        <taxon>Vibrionales</taxon>
        <taxon>Vibrionaceae</taxon>
        <taxon>Aliivibrio</taxon>
    </lineage>
</organism>